<reference key="1">
    <citation type="journal article" date="2010" name="Zoology">
        <title>Transcriptome analysis of the venom glands of the Chinese wolf spider Lycosa singoriensis.</title>
        <authorList>
            <person name="Zhang Y."/>
            <person name="Chen J."/>
            <person name="Tang X."/>
            <person name="Wang F."/>
            <person name="Jiang L."/>
            <person name="Xiong X."/>
            <person name="Wang M."/>
            <person name="Rong M."/>
            <person name="Liu Z."/>
            <person name="Liang S."/>
        </authorList>
    </citation>
    <scope>NUCLEOTIDE SEQUENCE [LARGE SCALE MRNA]</scope>
    <source>
        <tissue>Venom gland</tissue>
    </source>
</reference>
<protein>
    <recommendedName>
        <fullName>U1-lycotoxin-Ls1f</fullName>
    </recommendedName>
    <alternativeName>
        <fullName>Toxin-like structure LSTX-A29</fullName>
    </alternativeName>
</protein>
<evidence type="ECO:0000250" key="1"/>
<evidence type="ECO:0000255" key="2"/>
<evidence type="ECO:0000305" key="3"/>
<sequence>MMKVLVVVALLVTLISYSSSEGIDDLEADELLSLMANEQTRKECIPKHHECTSNKHGCCRGNFFKYKCQCTTVVTQDGEQTERCFCGTPPHHKAAELVVGFGKKFFG</sequence>
<organism>
    <name type="scientific">Lycosa singoriensis</name>
    <name type="common">Wolf spider</name>
    <name type="synonym">Aranea singoriensis</name>
    <dbReference type="NCBI Taxonomy" id="434756"/>
    <lineage>
        <taxon>Eukaryota</taxon>
        <taxon>Metazoa</taxon>
        <taxon>Ecdysozoa</taxon>
        <taxon>Arthropoda</taxon>
        <taxon>Chelicerata</taxon>
        <taxon>Arachnida</taxon>
        <taxon>Araneae</taxon>
        <taxon>Araneomorphae</taxon>
        <taxon>Entelegynae</taxon>
        <taxon>Lycosoidea</taxon>
        <taxon>Lycosidae</taxon>
        <taxon>Lycosa</taxon>
    </lineage>
</organism>
<name>TX129_LYCSI</name>
<keyword id="KW-1015">Disulfide bond</keyword>
<keyword id="KW-0960">Knottin</keyword>
<keyword id="KW-0964">Secreted</keyword>
<keyword id="KW-0732">Signal</keyword>
<keyword id="KW-0800">Toxin</keyword>
<comment type="subcellular location">
    <subcellularLocation>
        <location evidence="1">Secreted</location>
    </subcellularLocation>
</comment>
<comment type="tissue specificity">
    <text>Expressed by the venom gland.</text>
</comment>
<comment type="domain">
    <text evidence="1">The presence of a 'disulfide through disulfide knot' structurally defines this protein as a knottin.</text>
</comment>
<comment type="similarity">
    <text evidence="3">Belongs to the neurotoxin 19 (CSTX) family. 04 (U1-Lctx) subfamily.</text>
</comment>
<feature type="signal peptide" evidence="2">
    <location>
        <begin position="1"/>
        <end position="20"/>
    </location>
</feature>
<feature type="propeptide" id="PRO_0000401553" evidence="1">
    <location>
        <begin position="21"/>
        <end position="41"/>
    </location>
</feature>
<feature type="chain" id="PRO_0000401554" description="U1-lycotoxin-Ls1f">
    <location>
        <begin position="42"/>
        <end position="107"/>
    </location>
</feature>
<feature type="disulfide bond" evidence="1">
    <location>
        <begin position="44"/>
        <end position="59"/>
    </location>
</feature>
<feature type="disulfide bond" evidence="1">
    <location>
        <begin position="51"/>
        <end position="68"/>
    </location>
</feature>
<feature type="disulfide bond" evidence="1">
    <location>
        <begin position="58"/>
        <end position="86"/>
    </location>
</feature>
<feature type="disulfide bond" evidence="1">
    <location>
        <begin position="70"/>
        <end position="84"/>
    </location>
</feature>
<dbReference type="EMBL" id="EU925952">
    <property type="protein sequence ID" value="ACI41284.1"/>
    <property type="molecule type" value="mRNA"/>
</dbReference>
<dbReference type="EMBL" id="FM863956">
    <property type="protein sequence ID" value="CAS03554.1"/>
    <property type="molecule type" value="mRNA"/>
</dbReference>
<dbReference type="SMR" id="B6DCL8"/>
<dbReference type="ArachnoServer" id="AS000901">
    <property type="toxin name" value="U1-lycotoxin-Ls1f"/>
</dbReference>
<dbReference type="GO" id="GO:0005576">
    <property type="term" value="C:extracellular region"/>
    <property type="evidence" value="ECO:0007669"/>
    <property type="project" value="UniProtKB-SubCell"/>
</dbReference>
<dbReference type="GO" id="GO:0090729">
    <property type="term" value="F:toxin activity"/>
    <property type="evidence" value="ECO:0007669"/>
    <property type="project" value="UniProtKB-KW"/>
</dbReference>
<dbReference type="InterPro" id="IPR019553">
    <property type="entry name" value="Spider_toxin_CSTX_knottin"/>
</dbReference>
<dbReference type="InterPro" id="IPR011142">
    <property type="entry name" value="Spider_toxin_CSTX_Knottin_CS"/>
</dbReference>
<dbReference type="Pfam" id="PF10530">
    <property type="entry name" value="Toxin_35"/>
    <property type="match status" value="1"/>
</dbReference>
<dbReference type="PROSITE" id="PS60029">
    <property type="entry name" value="SPIDER_CSTX"/>
    <property type="match status" value="1"/>
</dbReference>
<accession>B6DCL8</accession>
<proteinExistence type="evidence at transcript level"/>